<organism>
    <name type="scientific">Homo sapiens</name>
    <name type="common">Human</name>
    <dbReference type="NCBI Taxonomy" id="9606"/>
    <lineage>
        <taxon>Eukaryota</taxon>
        <taxon>Metazoa</taxon>
        <taxon>Chordata</taxon>
        <taxon>Craniata</taxon>
        <taxon>Vertebrata</taxon>
        <taxon>Euteleostomi</taxon>
        <taxon>Mammalia</taxon>
        <taxon>Eutheria</taxon>
        <taxon>Euarchontoglires</taxon>
        <taxon>Primates</taxon>
        <taxon>Haplorrhini</taxon>
        <taxon>Catarrhini</taxon>
        <taxon>Hominidae</taxon>
        <taxon>Homo</taxon>
    </lineage>
</organism>
<proteinExistence type="evidence at protein level"/>
<sequence>MPVTVTRTTITTTTTSSSGLGSPMIVGSPRALTQPLGLLRLLQLVSTCVAFSLVASVGAWTGSMGNWSMFTWCFCFSVTLIILIVELCGLQARFPLSWRNFPITFACYAALFCLSASIIYPTTYVQFLSHGRSRDHAIAATFFSCIACVAYATEVAWTRARPGEITGYMATVPGLLKVLETFVACIIFAFISDPNLYQHQPALEWCVAVYAICFILAAIAILLNLGECTNVLPIPFPSFLSGLALLSVLLYATALVLWPLYQFDEKYGGQPRRSRDVSCSRSHAYYVCAWDRRLAVAILTAINLLAYVADLVHSAHLVFVKV</sequence>
<keyword id="KW-0472">Membrane</keyword>
<keyword id="KW-0597">Phosphoprotein</keyword>
<keyword id="KW-1267">Proteomics identification</keyword>
<keyword id="KW-1185">Reference proteome</keyword>
<keyword id="KW-0677">Repeat</keyword>
<keyword id="KW-0812">Transmembrane</keyword>
<keyword id="KW-1133">Transmembrane helix</keyword>
<comment type="interaction">
    <interactant intactId="EBI-13301517">
        <id>Q96S97</id>
    </interactant>
    <interactant intactId="EBI-638181">
        <id>P62330</id>
        <label>ARF6</label>
    </interactant>
    <organismsDiffer>false</organismsDiffer>
    <experiments>2</experiments>
</comment>
<comment type="interaction">
    <interactant intactId="EBI-13301517">
        <id>Q96S97</id>
    </interactant>
    <interactant intactId="EBI-7797864">
        <id>P11912</id>
        <label>CD79A</label>
    </interactant>
    <organismsDiffer>false</organismsDiffer>
    <experiments>3</experiments>
</comment>
<comment type="interaction">
    <interactant intactId="EBI-13301517">
        <id>Q96S97</id>
    </interactant>
    <interactant intactId="EBI-349854">
        <id>P13569</id>
        <label>CFTR</label>
    </interactant>
    <organismsDiffer>false</organismsDiffer>
    <experiments>3</experiments>
</comment>
<comment type="interaction">
    <interactant intactId="EBI-13301517">
        <id>Q96S97</id>
    </interactant>
    <interactant intactId="EBI-781551">
        <id>Q9Y282</id>
        <label>ERGIC3</label>
    </interactant>
    <organismsDiffer>false</organismsDiffer>
    <experiments>3</experiments>
</comment>
<comment type="interaction">
    <interactant intactId="EBI-13301517">
        <id>Q96S97</id>
    </interactant>
    <interactant intactId="EBI-742600">
        <id>Q9Y624</id>
        <label>F11R</label>
    </interactant>
    <organismsDiffer>false</organismsDiffer>
    <experiments>3</experiments>
</comment>
<comment type="interaction">
    <interactant intactId="EBI-13301517">
        <id>Q96S97</id>
    </interactant>
    <interactant intactId="EBI-18304435">
        <id>Q5JX71</id>
        <label>FAM209A</label>
    </interactant>
    <organismsDiffer>false</organismsDiffer>
    <experiments>3</experiments>
</comment>
<comment type="interaction">
    <interactant intactId="EBI-13301517">
        <id>Q96S97</id>
    </interactant>
    <interactant intactId="EBI-12887376">
        <id>Q96LL3</id>
        <label>FIMP</label>
    </interactant>
    <organismsDiffer>false</organismsDiffer>
    <experiments>3</experiments>
</comment>
<comment type="interaction">
    <interactant intactId="EBI-13301517">
        <id>Q96S97</id>
    </interactant>
    <interactant intactId="EBI-12142257">
        <id>Q8TBE3</id>
        <label>FNDC9</label>
    </interactant>
    <organismsDiffer>false</organismsDiffer>
    <experiments>3</experiments>
</comment>
<comment type="interaction">
    <interactant intactId="EBI-13301517">
        <id>Q96S97</id>
    </interactant>
    <interactant intactId="EBI-17263240">
        <id>P15941-11</id>
        <label>MUC1</label>
    </interactant>
    <organismsDiffer>false</organismsDiffer>
    <experiments>3</experiments>
</comment>
<comment type="interaction">
    <interactant intactId="EBI-13301517">
        <id>Q96S97</id>
    </interactant>
    <interactant intactId="EBI-716063">
        <id>Q13113</id>
        <label>PDZK1IP1</label>
    </interactant>
    <organismsDiffer>false</organismsDiffer>
    <experiments>3</experiments>
</comment>
<comment type="interaction">
    <interactant intactId="EBI-13301517">
        <id>Q96S97</id>
    </interactant>
    <interactant intactId="EBI-12188331">
        <id>P60201-2</id>
        <label>PLP1</label>
    </interactant>
    <organismsDiffer>false</organismsDiffer>
    <experiments>3</experiments>
</comment>
<comment type="interaction">
    <interactant intactId="EBI-13301517">
        <id>Q96S97</id>
    </interactant>
    <interactant intactId="EBI-1647060">
        <id>Q68DV7</id>
        <label>RNF43</label>
    </interactant>
    <organismsDiffer>false</organismsDiffer>
    <experiments>2</experiments>
</comment>
<comment type="interaction">
    <interactant intactId="EBI-13301517">
        <id>Q96S97</id>
    </interactant>
    <interactant intactId="EBI-2821497">
        <id>Q9BVX2</id>
        <label>TMEM106C</label>
    </interactant>
    <organismsDiffer>false</organismsDiffer>
    <experiments>3</experiments>
</comment>
<comment type="subcellular location">
    <subcellularLocation>
        <location evidence="5">Membrane</location>
        <topology evidence="5">Multi-pass membrane protein</topology>
    </subcellularLocation>
</comment>
<comment type="tissue specificity">
    <text evidence="4">Widely expressed. Not detected in thymus.</text>
</comment>
<comment type="similarity">
    <text evidence="5">Belongs to the MAL family.</text>
</comment>
<comment type="sequence caution" evidence="5">
    <conflict type="frameshift">
        <sequence resource="EMBL-CDS" id="AAP97182"/>
    </conflict>
</comment>
<comment type="sequence caution" evidence="5">
    <conflict type="erroneous initiation">
        <sequence resource="EMBL-CDS" id="BAB55302"/>
    </conflict>
</comment>
<evidence type="ECO:0000255" key="1"/>
<evidence type="ECO:0000255" key="2">
    <source>
        <dbReference type="PROSITE-ProRule" id="PRU00581"/>
    </source>
</evidence>
<evidence type="ECO:0000256" key="3">
    <source>
        <dbReference type="SAM" id="MobiDB-lite"/>
    </source>
</evidence>
<evidence type="ECO:0000269" key="4">
    <source>
    </source>
</evidence>
<evidence type="ECO:0000305" key="5"/>
<evidence type="ECO:0007744" key="6">
    <source>
    </source>
</evidence>
<name>MYADM_HUMAN</name>
<feature type="chain" id="PRO_0000156816" description="Myeloid-associated differentiation marker">
    <location>
        <begin position="1"/>
        <end position="322"/>
    </location>
</feature>
<feature type="transmembrane region" description="Helical" evidence="1">
    <location>
        <begin position="41"/>
        <end position="61"/>
    </location>
</feature>
<feature type="transmembrane region" description="Helical" evidence="1">
    <location>
        <begin position="70"/>
        <end position="90"/>
    </location>
</feature>
<feature type="transmembrane region" description="Helical" evidence="1">
    <location>
        <begin position="101"/>
        <end position="121"/>
    </location>
</feature>
<feature type="transmembrane region" description="Helical" evidence="1">
    <location>
        <begin position="137"/>
        <end position="157"/>
    </location>
</feature>
<feature type="transmembrane region" description="Helical" evidence="1">
    <location>
        <begin position="171"/>
        <end position="191"/>
    </location>
</feature>
<feature type="transmembrane region" description="Helical" evidence="1">
    <location>
        <begin position="203"/>
        <end position="223"/>
    </location>
</feature>
<feature type="transmembrane region" description="Helical" evidence="1">
    <location>
        <begin position="239"/>
        <end position="259"/>
    </location>
</feature>
<feature type="transmembrane region" description="Helical" evidence="1">
    <location>
        <begin position="294"/>
        <end position="314"/>
    </location>
</feature>
<feature type="domain" description="MARVEL 1" evidence="2">
    <location>
        <begin position="31"/>
        <end position="163"/>
    </location>
</feature>
<feature type="domain" description="MARVEL 2" evidence="2">
    <location>
        <begin position="168"/>
        <end position="319"/>
    </location>
</feature>
<feature type="region of interest" description="Disordered" evidence="3">
    <location>
        <begin position="1"/>
        <end position="21"/>
    </location>
</feature>
<feature type="compositionally biased region" description="Low complexity" evidence="3">
    <location>
        <begin position="1"/>
        <end position="18"/>
    </location>
</feature>
<feature type="modified residue" description="Phosphoserine" evidence="6">
    <location>
        <position position="22"/>
    </location>
</feature>
<feature type="sequence conflict" description="In Ref. 4; BAC04265." evidence="5" ref="4">
    <location>
        <begin position="77"/>
        <end position="94"/>
    </location>
</feature>
<feature type="sequence conflict" description="In Ref. 1." evidence="5" ref="1">
    <original>C</original>
    <variation>G</variation>
    <location>
        <position position="279"/>
    </location>
</feature>
<accession>Q96S97</accession>
<accession>B2RE58</accession>
<accession>Q542Z1</accession>
<accession>Q7Z507</accession>
<accession>Q8N9R4</accession>
<accession>Q96CS6</accession>
<accession>Q96SK9</accession>
<reference key="1">
    <citation type="journal article" date="2001" name="Mol. Biol. Rep.">
        <title>Cloning of human myeloid-associated differentiation marker (MYADM) gene whose expression was up-regulated in NB4 cells induced by all-trans retinoic acid.</title>
        <authorList>
            <person name="Cui W."/>
            <person name="Yu L."/>
            <person name="He H."/>
            <person name="Chu Y."/>
            <person name="Gao J."/>
            <person name="Wan B."/>
            <person name="Tang L."/>
            <person name="Zhao S."/>
        </authorList>
    </citation>
    <scope>NUCLEOTIDE SEQUENCE [MRNA]</scope>
    <scope>TISSUE SPECIFICITY</scope>
    <source>
        <tissue>Bone marrow</tissue>
    </source>
</reference>
<reference key="2">
    <citation type="submission" date="2001-12" db="EMBL/GenBank/DDBJ databases">
        <authorList>
            <person name="Li N."/>
            <person name="Wan T."/>
            <person name="Zhang W."/>
            <person name="Cao X."/>
        </authorList>
    </citation>
    <scope>NUCLEOTIDE SEQUENCE [MRNA]</scope>
</reference>
<reference key="3">
    <citation type="journal article" date="2003" name="Genome Res.">
        <title>The secreted protein discovery initiative (SPDI), a large-scale effort to identify novel human secreted and transmembrane proteins: a bioinformatics assessment.</title>
        <authorList>
            <person name="Clark H.F."/>
            <person name="Gurney A.L."/>
            <person name="Abaya E."/>
            <person name="Baker K."/>
            <person name="Baldwin D.T."/>
            <person name="Brush J."/>
            <person name="Chen J."/>
            <person name="Chow B."/>
            <person name="Chui C."/>
            <person name="Crowley C."/>
            <person name="Currell B."/>
            <person name="Deuel B."/>
            <person name="Dowd P."/>
            <person name="Eaton D."/>
            <person name="Foster J.S."/>
            <person name="Grimaldi C."/>
            <person name="Gu Q."/>
            <person name="Hass P.E."/>
            <person name="Heldens S."/>
            <person name="Huang A."/>
            <person name="Kim H.S."/>
            <person name="Klimowski L."/>
            <person name="Jin Y."/>
            <person name="Johnson S."/>
            <person name="Lee J."/>
            <person name="Lewis L."/>
            <person name="Liao D."/>
            <person name="Mark M.R."/>
            <person name="Robbie E."/>
            <person name="Sanchez C."/>
            <person name="Schoenfeld J."/>
            <person name="Seshagiri S."/>
            <person name="Simmons L."/>
            <person name="Singh J."/>
            <person name="Smith V."/>
            <person name="Stinson J."/>
            <person name="Vagts A."/>
            <person name="Vandlen R.L."/>
            <person name="Watanabe C."/>
            <person name="Wieand D."/>
            <person name="Woods K."/>
            <person name="Xie M.-H."/>
            <person name="Yansura D.G."/>
            <person name="Yi S."/>
            <person name="Yu G."/>
            <person name="Yuan J."/>
            <person name="Zhang M."/>
            <person name="Zhang Z."/>
            <person name="Goddard A.D."/>
            <person name="Wood W.I."/>
            <person name="Godowski P.J."/>
            <person name="Gray A.M."/>
        </authorList>
    </citation>
    <scope>NUCLEOTIDE SEQUENCE [LARGE SCALE MRNA]</scope>
</reference>
<reference key="4">
    <citation type="journal article" date="2004" name="Nat. Genet.">
        <title>Complete sequencing and characterization of 21,243 full-length human cDNAs.</title>
        <authorList>
            <person name="Ota T."/>
            <person name="Suzuki Y."/>
            <person name="Nishikawa T."/>
            <person name="Otsuki T."/>
            <person name="Sugiyama T."/>
            <person name="Irie R."/>
            <person name="Wakamatsu A."/>
            <person name="Hayashi K."/>
            <person name="Sato H."/>
            <person name="Nagai K."/>
            <person name="Kimura K."/>
            <person name="Makita H."/>
            <person name="Sekine M."/>
            <person name="Obayashi M."/>
            <person name="Nishi T."/>
            <person name="Shibahara T."/>
            <person name="Tanaka T."/>
            <person name="Ishii S."/>
            <person name="Yamamoto J."/>
            <person name="Saito K."/>
            <person name="Kawai Y."/>
            <person name="Isono Y."/>
            <person name="Nakamura Y."/>
            <person name="Nagahari K."/>
            <person name="Murakami K."/>
            <person name="Yasuda T."/>
            <person name="Iwayanagi T."/>
            <person name="Wagatsuma M."/>
            <person name="Shiratori A."/>
            <person name="Sudo H."/>
            <person name="Hosoiri T."/>
            <person name="Kaku Y."/>
            <person name="Kodaira H."/>
            <person name="Kondo H."/>
            <person name="Sugawara M."/>
            <person name="Takahashi M."/>
            <person name="Kanda K."/>
            <person name="Yokoi T."/>
            <person name="Furuya T."/>
            <person name="Kikkawa E."/>
            <person name="Omura Y."/>
            <person name="Abe K."/>
            <person name="Kamihara K."/>
            <person name="Katsuta N."/>
            <person name="Sato K."/>
            <person name="Tanikawa M."/>
            <person name="Yamazaki M."/>
            <person name="Ninomiya K."/>
            <person name="Ishibashi T."/>
            <person name="Yamashita H."/>
            <person name="Murakawa K."/>
            <person name="Fujimori K."/>
            <person name="Tanai H."/>
            <person name="Kimata M."/>
            <person name="Watanabe M."/>
            <person name="Hiraoka S."/>
            <person name="Chiba Y."/>
            <person name="Ishida S."/>
            <person name="Ono Y."/>
            <person name="Takiguchi S."/>
            <person name="Watanabe S."/>
            <person name="Yosida M."/>
            <person name="Hotuta T."/>
            <person name="Kusano J."/>
            <person name="Kanehori K."/>
            <person name="Takahashi-Fujii A."/>
            <person name="Hara H."/>
            <person name="Tanase T.-O."/>
            <person name="Nomura Y."/>
            <person name="Togiya S."/>
            <person name="Komai F."/>
            <person name="Hara R."/>
            <person name="Takeuchi K."/>
            <person name="Arita M."/>
            <person name="Imose N."/>
            <person name="Musashino K."/>
            <person name="Yuuki H."/>
            <person name="Oshima A."/>
            <person name="Sasaki N."/>
            <person name="Aotsuka S."/>
            <person name="Yoshikawa Y."/>
            <person name="Matsunawa H."/>
            <person name="Ichihara T."/>
            <person name="Shiohata N."/>
            <person name="Sano S."/>
            <person name="Moriya S."/>
            <person name="Momiyama H."/>
            <person name="Satoh N."/>
            <person name="Takami S."/>
            <person name="Terashima Y."/>
            <person name="Suzuki O."/>
            <person name="Nakagawa S."/>
            <person name="Senoh A."/>
            <person name="Mizoguchi H."/>
            <person name="Goto Y."/>
            <person name="Shimizu F."/>
            <person name="Wakebe H."/>
            <person name="Hishigaki H."/>
            <person name="Watanabe T."/>
            <person name="Sugiyama A."/>
            <person name="Takemoto M."/>
            <person name="Kawakami B."/>
            <person name="Yamazaki M."/>
            <person name="Watanabe K."/>
            <person name="Kumagai A."/>
            <person name="Itakura S."/>
            <person name="Fukuzumi Y."/>
            <person name="Fujimori Y."/>
            <person name="Komiyama M."/>
            <person name="Tashiro H."/>
            <person name="Tanigami A."/>
            <person name="Fujiwara T."/>
            <person name="Ono T."/>
            <person name="Yamada K."/>
            <person name="Fujii Y."/>
            <person name="Ozaki K."/>
            <person name="Hirao M."/>
            <person name="Ohmori Y."/>
            <person name="Kawabata A."/>
            <person name="Hikiji T."/>
            <person name="Kobatake N."/>
            <person name="Inagaki H."/>
            <person name="Ikema Y."/>
            <person name="Okamoto S."/>
            <person name="Okitani R."/>
            <person name="Kawakami T."/>
            <person name="Noguchi S."/>
            <person name="Itoh T."/>
            <person name="Shigeta K."/>
            <person name="Senba T."/>
            <person name="Matsumura K."/>
            <person name="Nakajima Y."/>
            <person name="Mizuno T."/>
            <person name="Morinaga M."/>
            <person name="Sasaki M."/>
            <person name="Togashi T."/>
            <person name="Oyama M."/>
            <person name="Hata H."/>
            <person name="Watanabe M."/>
            <person name="Komatsu T."/>
            <person name="Mizushima-Sugano J."/>
            <person name="Satoh T."/>
            <person name="Shirai Y."/>
            <person name="Takahashi Y."/>
            <person name="Nakagawa K."/>
            <person name="Okumura K."/>
            <person name="Nagase T."/>
            <person name="Nomura N."/>
            <person name="Kikuchi H."/>
            <person name="Masuho Y."/>
            <person name="Yamashita R."/>
            <person name="Nakai K."/>
            <person name="Yada T."/>
            <person name="Nakamura Y."/>
            <person name="Ohara O."/>
            <person name="Isogai T."/>
            <person name="Sugano S."/>
        </authorList>
    </citation>
    <scope>NUCLEOTIDE SEQUENCE [LARGE SCALE MRNA]</scope>
    <source>
        <tissue>Teratocarcinoma</tissue>
        <tissue>Uterus</tissue>
    </source>
</reference>
<reference key="5">
    <citation type="journal article" date="2005" name="DNA Res.">
        <title>Signal sequence and keyword trap in silico for selection of full-length human cDNAs encoding secretion or membrane proteins from oligo-capped cDNA libraries.</title>
        <authorList>
            <person name="Otsuki T."/>
            <person name="Ota T."/>
            <person name="Nishikawa T."/>
            <person name="Hayashi K."/>
            <person name="Suzuki Y."/>
            <person name="Yamamoto J."/>
            <person name="Wakamatsu A."/>
            <person name="Kimura K."/>
            <person name="Sakamoto K."/>
            <person name="Hatano N."/>
            <person name="Kawai Y."/>
            <person name="Ishii S."/>
            <person name="Saito K."/>
            <person name="Kojima S."/>
            <person name="Sugiyama T."/>
            <person name="Ono T."/>
            <person name="Okano K."/>
            <person name="Yoshikawa Y."/>
            <person name="Aotsuka S."/>
            <person name="Sasaki N."/>
            <person name="Hattori A."/>
            <person name="Okumura K."/>
            <person name="Nagai K."/>
            <person name="Sugano S."/>
            <person name="Isogai T."/>
        </authorList>
    </citation>
    <scope>NUCLEOTIDE SEQUENCE [LARGE SCALE MRNA]</scope>
    <source>
        <tissue>Thyroid</tissue>
    </source>
</reference>
<reference key="6">
    <citation type="submission" date="2005-07" db="EMBL/GenBank/DDBJ databases">
        <authorList>
            <person name="Mural R.J."/>
            <person name="Istrail S."/>
            <person name="Sutton G.G."/>
            <person name="Florea L."/>
            <person name="Halpern A.L."/>
            <person name="Mobarry C.M."/>
            <person name="Lippert R."/>
            <person name="Walenz B."/>
            <person name="Shatkay H."/>
            <person name="Dew I."/>
            <person name="Miller J.R."/>
            <person name="Flanigan M.J."/>
            <person name="Edwards N.J."/>
            <person name="Bolanos R."/>
            <person name="Fasulo D."/>
            <person name="Halldorsson B.V."/>
            <person name="Hannenhalli S."/>
            <person name="Turner R."/>
            <person name="Yooseph S."/>
            <person name="Lu F."/>
            <person name="Nusskern D.R."/>
            <person name="Shue B.C."/>
            <person name="Zheng X.H."/>
            <person name="Zhong F."/>
            <person name="Delcher A.L."/>
            <person name="Huson D.H."/>
            <person name="Kravitz S.A."/>
            <person name="Mouchard L."/>
            <person name="Reinert K."/>
            <person name="Remington K.A."/>
            <person name="Clark A.G."/>
            <person name="Waterman M.S."/>
            <person name="Eichler E.E."/>
            <person name="Adams M.D."/>
            <person name="Hunkapiller M.W."/>
            <person name="Myers E.W."/>
            <person name="Venter J.C."/>
        </authorList>
    </citation>
    <scope>NUCLEOTIDE SEQUENCE [LARGE SCALE GENOMIC DNA]</scope>
</reference>
<reference key="7">
    <citation type="journal article" date="2004" name="Genome Res.">
        <title>The status, quality, and expansion of the NIH full-length cDNA project: the Mammalian Gene Collection (MGC).</title>
        <authorList>
            <consortium name="The MGC Project Team"/>
        </authorList>
    </citation>
    <scope>NUCLEOTIDE SEQUENCE [LARGE SCALE MRNA]</scope>
    <source>
        <tissue>Brain</tissue>
        <tissue>Placenta</tissue>
    </source>
</reference>
<reference key="8">
    <citation type="journal article" date="2008" name="Proc. Natl. Acad. Sci. U.S.A.">
        <title>A quantitative atlas of mitotic phosphorylation.</title>
        <authorList>
            <person name="Dephoure N."/>
            <person name="Zhou C."/>
            <person name="Villen J."/>
            <person name="Beausoleil S.A."/>
            <person name="Bakalarski C.E."/>
            <person name="Elledge S.J."/>
            <person name="Gygi S.P."/>
        </authorList>
    </citation>
    <scope>PHOSPHORYLATION [LARGE SCALE ANALYSIS] AT SER-22</scope>
    <scope>IDENTIFICATION BY MASS SPECTROMETRY [LARGE SCALE ANALYSIS]</scope>
    <source>
        <tissue>Cervix carcinoma</tissue>
    </source>
</reference>
<reference key="9">
    <citation type="journal article" date="2009" name="Sci. Signal.">
        <title>Quantitative phosphoproteomic analysis of T cell receptor signaling reveals system-wide modulation of protein-protein interactions.</title>
        <authorList>
            <person name="Mayya V."/>
            <person name="Lundgren D.H."/>
            <person name="Hwang S.-I."/>
            <person name="Rezaul K."/>
            <person name="Wu L."/>
            <person name="Eng J.K."/>
            <person name="Rodionov V."/>
            <person name="Han D.K."/>
        </authorList>
    </citation>
    <scope>IDENTIFICATION BY MASS SPECTROMETRY [LARGE SCALE ANALYSIS]</scope>
    <source>
        <tissue>Leukemic T-cell</tissue>
    </source>
</reference>
<reference key="10">
    <citation type="journal article" date="2013" name="J. Proteome Res.">
        <title>Toward a comprehensive characterization of a human cancer cell phosphoproteome.</title>
        <authorList>
            <person name="Zhou H."/>
            <person name="Di Palma S."/>
            <person name="Preisinger C."/>
            <person name="Peng M."/>
            <person name="Polat A.N."/>
            <person name="Heck A.J."/>
            <person name="Mohammed S."/>
        </authorList>
    </citation>
    <scope>IDENTIFICATION BY MASS SPECTROMETRY [LARGE SCALE ANALYSIS]</scope>
    <source>
        <tissue>Erythroleukemia</tissue>
    </source>
</reference>
<reference key="11">
    <citation type="journal article" date="2015" name="Proteomics">
        <title>N-terminome analysis of the human mitochondrial proteome.</title>
        <authorList>
            <person name="Vaca Jacome A.S."/>
            <person name="Rabilloud T."/>
            <person name="Schaeffer-Reiss C."/>
            <person name="Rompais M."/>
            <person name="Ayoub D."/>
            <person name="Lane L."/>
            <person name="Bairoch A."/>
            <person name="Van Dorsselaer A."/>
            <person name="Carapito C."/>
        </authorList>
    </citation>
    <scope>IDENTIFICATION BY MASS SPECTROMETRY [LARGE SCALE ANALYSIS]</scope>
</reference>
<gene>
    <name type="primary">MYADM</name>
    <name type="ORF">UNQ553/PRO1110</name>
</gene>
<protein>
    <recommendedName>
        <fullName>Myeloid-associated differentiation marker</fullName>
    </recommendedName>
    <alternativeName>
        <fullName>Protein SB135</fullName>
    </alternativeName>
</protein>
<dbReference type="EMBL" id="AF087882">
    <property type="protein sequence ID" value="AAP97182.1"/>
    <property type="status" value="ALT_FRAME"/>
    <property type="molecule type" value="mRNA"/>
</dbReference>
<dbReference type="EMBL" id="AY037147">
    <property type="protein sequence ID" value="AAK67628.2"/>
    <property type="molecule type" value="mRNA"/>
</dbReference>
<dbReference type="EMBL" id="AY358582">
    <property type="protein sequence ID" value="AAQ88945.1"/>
    <property type="molecule type" value="mRNA"/>
</dbReference>
<dbReference type="EMBL" id="AK027693">
    <property type="protein sequence ID" value="BAB55302.1"/>
    <property type="status" value="ALT_INIT"/>
    <property type="molecule type" value="mRNA"/>
</dbReference>
<dbReference type="EMBL" id="AK093999">
    <property type="protein sequence ID" value="BAC04265.1"/>
    <property type="molecule type" value="mRNA"/>
</dbReference>
<dbReference type="EMBL" id="AK075276">
    <property type="protein sequence ID" value="BAC11513.1"/>
    <property type="molecule type" value="mRNA"/>
</dbReference>
<dbReference type="EMBL" id="AK316566">
    <property type="protein sequence ID" value="BAG38155.1"/>
    <property type="molecule type" value="mRNA"/>
</dbReference>
<dbReference type="EMBL" id="CH471135">
    <property type="protein sequence ID" value="EAW72159.1"/>
    <property type="molecule type" value="Genomic_DNA"/>
</dbReference>
<dbReference type="EMBL" id="BC013995">
    <property type="protein sequence ID" value="AAH13995.1"/>
    <property type="molecule type" value="mRNA"/>
</dbReference>
<dbReference type="EMBL" id="BC095412">
    <property type="protein sequence ID" value="AAH95412.1"/>
    <property type="molecule type" value="mRNA"/>
</dbReference>
<dbReference type="CCDS" id="CCDS12866.1"/>
<dbReference type="RefSeq" id="NP_001018654.1">
    <property type="nucleotide sequence ID" value="NM_001020818.2"/>
</dbReference>
<dbReference type="RefSeq" id="NP_001018655.1">
    <property type="nucleotide sequence ID" value="NM_001020819.3"/>
</dbReference>
<dbReference type="RefSeq" id="NP_001018656.1">
    <property type="nucleotide sequence ID" value="NM_001020820.3"/>
</dbReference>
<dbReference type="RefSeq" id="NP_001018657.1">
    <property type="nucleotide sequence ID" value="NM_001020821.2"/>
</dbReference>
<dbReference type="RefSeq" id="NP_001277117.1">
    <property type="nucleotide sequence ID" value="NM_001290188.2"/>
</dbReference>
<dbReference type="RefSeq" id="NP_001277118.1">
    <property type="nucleotide sequence ID" value="NM_001290189.1"/>
</dbReference>
<dbReference type="RefSeq" id="NP_001277119.1">
    <property type="nucleotide sequence ID" value="NM_001290190.2"/>
</dbReference>
<dbReference type="RefSeq" id="NP_001277120.1">
    <property type="nucleotide sequence ID" value="NM_001290191.2"/>
</dbReference>
<dbReference type="RefSeq" id="NP_001277121.1">
    <property type="nucleotide sequence ID" value="NM_001290192.2"/>
</dbReference>
<dbReference type="RefSeq" id="NP_001277122.1">
    <property type="nucleotide sequence ID" value="NM_001290193.2"/>
</dbReference>
<dbReference type="RefSeq" id="NP_001277123.1">
    <property type="nucleotide sequence ID" value="NM_001290194.2"/>
</dbReference>
<dbReference type="RefSeq" id="NP_612382.1">
    <property type="nucleotide sequence ID" value="NM_138373.5"/>
</dbReference>
<dbReference type="BioGRID" id="124862">
    <property type="interactions" value="124"/>
</dbReference>
<dbReference type="FunCoup" id="Q96S97">
    <property type="interactions" value="53"/>
</dbReference>
<dbReference type="IntAct" id="Q96S97">
    <property type="interactions" value="76"/>
</dbReference>
<dbReference type="MINT" id="Q96S97"/>
<dbReference type="STRING" id="9606.ENSP00000375649"/>
<dbReference type="TCDB" id="1.A.64.3.1">
    <property type="family name" value="the plasmolipin (plasmolipin) family"/>
</dbReference>
<dbReference type="GlyGen" id="Q96S97">
    <property type="glycosylation" value="1 site, 1 O-linked glycan (1 site)"/>
</dbReference>
<dbReference type="iPTMnet" id="Q96S97"/>
<dbReference type="PhosphoSitePlus" id="Q96S97"/>
<dbReference type="SwissPalm" id="Q96S97"/>
<dbReference type="BioMuta" id="MYADM"/>
<dbReference type="DMDM" id="21263793"/>
<dbReference type="jPOST" id="Q96S97"/>
<dbReference type="MassIVE" id="Q96S97"/>
<dbReference type="PaxDb" id="9606-ENSP00000375649"/>
<dbReference type="PeptideAtlas" id="Q96S97"/>
<dbReference type="ProteomicsDB" id="78092"/>
<dbReference type="Pumba" id="Q96S97"/>
<dbReference type="Antibodypedia" id="19206">
    <property type="antibodies" value="239 antibodies from 20 providers"/>
</dbReference>
<dbReference type="DNASU" id="91663"/>
<dbReference type="Ensembl" id="ENST00000391768.2">
    <property type="protein sequence ID" value="ENSP00000375648.2"/>
    <property type="gene ID" value="ENSG00000179820.17"/>
</dbReference>
<dbReference type="Ensembl" id="ENST00000391769.3">
    <property type="protein sequence ID" value="ENSP00000375649.2"/>
    <property type="gene ID" value="ENSG00000179820.17"/>
</dbReference>
<dbReference type="Ensembl" id="ENST00000391770.9">
    <property type="protein sequence ID" value="ENSP00000375650.4"/>
    <property type="gene ID" value="ENSG00000179820.17"/>
</dbReference>
<dbReference type="Ensembl" id="ENST00000391771.1">
    <property type="protein sequence ID" value="ENSP00000375651.1"/>
    <property type="gene ID" value="ENSG00000179820.17"/>
</dbReference>
<dbReference type="Ensembl" id="ENST00000421337.6">
    <property type="protein sequence ID" value="ENSP00000398269.2"/>
    <property type="gene ID" value="ENSG00000179820.17"/>
</dbReference>
<dbReference type="GeneID" id="91663"/>
<dbReference type="KEGG" id="hsa:91663"/>
<dbReference type="MANE-Select" id="ENST00000391770.9">
    <property type="protein sequence ID" value="ENSP00000375650.4"/>
    <property type="RefSeq nucleotide sequence ID" value="NM_138373.5"/>
    <property type="RefSeq protein sequence ID" value="NP_612382.1"/>
</dbReference>
<dbReference type="UCSC" id="uc002qcl.4">
    <property type="organism name" value="human"/>
</dbReference>
<dbReference type="AGR" id="HGNC:7544"/>
<dbReference type="CTD" id="91663"/>
<dbReference type="DisGeNET" id="91663"/>
<dbReference type="GeneCards" id="MYADM"/>
<dbReference type="HGNC" id="HGNC:7544">
    <property type="gene designation" value="MYADM"/>
</dbReference>
<dbReference type="HPA" id="ENSG00000179820">
    <property type="expression patterns" value="Low tissue specificity"/>
</dbReference>
<dbReference type="MIM" id="609959">
    <property type="type" value="gene"/>
</dbReference>
<dbReference type="neXtProt" id="NX_Q96S97"/>
<dbReference type="OpenTargets" id="ENSG00000179820"/>
<dbReference type="PharmGKB" id="PA31344"/>
<dbReference type="VEuPathDB" id="HostDB:ENSG00000179820"/>
<dbReference type="eggNOG" id="KOG4788">
    <property type="taxonomic scope" value="Eukaryota"/>
</dbReference>
<dbReference type="GeneTree" id="ENSGT00950000182933"/>
<dbReference type="InParanoid" id="Q96S97"/>
<dbReference type="OMA" id="GGMADWC"/>
<dbReference type="OrthoDB" id="8737882at2759"/>
<dbReference type="PAN-GO" id="Q96S97">
    <property type="GO annotations" value="3 GO annotations based on evolutionary models"/>
</dbReference>
<dbReference type="PhylomeDB" id="Q96S97"/>
<dbReference type="TreeFam" id="TF331088"/>
<dbReference type="PathwayCommons" id="Q96S97"/>
<dbReference type="SignaLink" id="Q96S97"/>
<dbReference type="BioGRID-ORCS" id="91663">
    <property type="hits" value="200 hits in 1156 CRISPR screens"/>
</dbReference>
<dbReference type="ChiTaRS" id="MYADM">
    <property type="organism name" value="human"/>
</dbReference>
<dbReference type="GeneWiki" id="MYADM"/>
<dbReference type="GenomeRNAi" id="91663"/>
<dbReference type="Pharos" id="Q96S97">
    <property type="development level" value="Tbio"/>
</dbReference>
<dbReference type="PRO" id="PR:Q96S97"/>
<dbReference type="Proteomes" id="UP000005640">
    <property type="component" value="Chromosome 19"/>
</dbReference>
<dbReference type="RNAct" id="Q96S97">
    <property type="molecule type" value="protein"/>
</dbReference>
<dbReference type="Bgee" id="ENSG00000179820">
    <property type="expression patterns" value="Expressed in oviduct epithelium and 191 other cell types or tissues"/>
</dbReference>
<dbReference type="ExpressionAtlas" id="Q96S97">
    <property type="expression patterns" value="baseline and differential"/>
</dbReference>
<dbReference type="GO" id="GO:0005911">
    <property type="term" value="C:cell-cell junction"/>
    <property type="evidence" value="ECO:0000314"/>
    <property type="project" value="UniProtKB"/>
</dbReference>
<dbReference type="GO" id="GO:0030864">
    <property type="term" value="C:cortical actin cytoskeleton"/>
    <property type="evidence" value="ECO:0000314"/>
    <property type="project" value="UniProtKB"/>
</dbReference>
<dbReference type="GO" id="GO:0045121">
    <property type="term" value="C:membrane raft"/>
    <property type="evidence" value="ECO:0000314"/>
    <property type="project" value="UniProtKB"/>
</dbReference>
<dbReference type="GO" id="GO:0005886">
    <property type="term" value="C:plasma membrane"/>
    <property type="evidence" value="ECO:0000314"/>
    <property type="project" value="UniProtKB"/>
</dbReference>
<dbReference type="GO" id="GO:0001726">
    <property type="term" value="C:ruffle"/>
    <property type="evidence" value="ECO:0000314"/>
    <property type="project" value="UniProtKB"/>
</dbReference>
<dbReference type="GO" id="GO:0061028">
    <property type="term" value="P:establishment of endothelial barrier"/>
    <property type="evidence" value="ECO:0000315"/>
    <property type="project" value="UniProtKB"/>
</dbReference>
<dbReference type="GO" id="GO:0035556">
    <property type="term" value="P:intracellular signal transduction"/>
    <property type="evidence" value="ECO:0000315"/>
    <property type="project" value="UniProtKB"/>
</dbReference>
<dbReference type="GO" id="GO:0031579">
    <property type="term" value="P:membrane raft organization"/>
    <property type="evidence" value="ECO:0000315"/>
    <property type="project" value="UniProtKB"/>
</dbReference>
<dbReference type="GO" id="GO:0030837">
    <property type="term" value="P:negative regulation of actin filament polymerization"/>
    <property type="evidence" value="ECO:0000315"/>
    <property type="project" value="UniProtKB"/>
</dbReference>
<dbReference type="GO" id="GO:0010629">
    <property type="term" value="P:negative regulation of gene expression"/>
    <property type="evidence" value="ECO:0000315"/>
    <property type="project" value="UniProtKB"/>
</dbReference>
<dbReference type="GO" id="GO:0034115">
    <property type="term" value="P:negative regulation of heterotypic cell-cell adhesion"/>
    <property type="evidence" value="ECO:0000314"/>
    <property type="project" value="UniProtKB"/>
</dbReference>
<dbReference type="GO" id="GO:0030335">
    <property type="term" value="P:positive regulation of cell migration"/>
    <property type="evidence" value="ECO:0000315"/>
    <property type="project" value="UniProtKB"/>
</dbReference>
<dbReference type="GO" id="GO:1900026">
    <property type="term" value="P:positive regulation of substrate adhesion-dependent cell spreading"/>
    <property type="evidence" value="ECO:0000315"/>
    <property type="project" value="UniProtKB"/>
</dbReference>
<dbReference type="GO" id="GO:0044860">
    <property type="term" value="P:protein localization to plasma membrane raft"/>
    <property type="evidence" value="ECO:0000315"/>
    <property type="project" value="UniProtKB"/>
</dbReference>
<dbReference type="InterPro" id="IPR008253">
    <property type="entry name" value="Marvel"/>
</dbReference>
<dbReference type="InterPro" id="IPR047123">
    <property type="entry name" value="MYADM-like"/>
</dbReference>
<dbReference type="PANTHER" id="PTHR17068:SF3">
    <property type="entry name" value="MYELOID-ASSOCIATED DIFFERENTIATION MARKER"/>
    <property type="match status" value="1"/>
</dbReference>
<dbReference type="PANTHER" id="PTHR17068">
    <property type="entry name" value="MYELOID-ASSOCIATED DIFFERENTIATION MARKER MYADM FAMILY MEMBER"/>
    <property type="match status" value="1"/>
</dbReference>
<dbReference type="Pfam" id="PF01284">
    <property type="entry name" value="MARVEL"/>
    <property type="match status" value="2"/>
</dbReference>
<dbReference type="PROSITE" id="PS51225">
    <property type="entry name" value="MARVEL"/>
    <property type="match status" value="2"/>
</dbReference>